<protein>
    <recommendedName>
        <fullName evidence="1">tRNA pseudouridine synthase B</fullName>
        <ecNumber evidence="1">5.4.99.25</ecNumber>
    </recommendedName>
    <alternativeName>
        <fullName evidence="1">tRNA pseudouridine(55) synthase</fullName>
        <shortName evidence="1">Psi55 synthase</shortName>
    </alternativeName>
    <alternativeName>
        <fullName evidence="1">tRNA pseudouridylate synthase</fullName>
    </alternativeName>
    <alternativeName>
        <fullName evidence="1">tRNA-uridine isomerase</fullName>
    </alternativeName>
</protein>
<sequence>MSRPRKPKGRPISGWLILDKPLDFGSTEAVSKIKWLFKAQKAGHAGTLDPLASGMLPIALGDATKTVPYVMDGRKIYEFTVAWGEERSTDDLEGEAVRSSAARPEEEAIRALLPKYTGVIAQVPPQFSAIKIGGERAYDLARDGETVEIPAREVEVFRLSLIGSAPNLAHFEIECGKGTYVRSLARDMGRDLGCFGHIASLRRTFVAPFGEEDMVPLADLVALEAIEDDAERLAALDAYLIDTGEALSDLPHIAVNDDQAHRLRMGNPIILRGRDAPLPTPEAYATAQGKLVAIGEIAEGEFRPKRVFATQ</sequence>
<feature type="chain" id="PRO_0000121891" description="tRNA pseudouridine synthase B">
    <location>
        <begin position="1"/>
        <end position="311"/>
    </location>
</feature>
<feature type="active site" description="Nucleophile" evidence="1">
    <location>
        <position position="49"/>
    </location>
</feature>
<organism>
    <name type="scientific">Rhizobium meliloti (strain 1021)</name>
    <name type="common">Ensifer meliloti</name>
    <name type="synonym">Sinorhizobium meliloti</name>
    <dbReference type="NCBI Taxonomy" id="266834"/>
    <lineage>
        <taxon>Bacteria</taxon>
        <taxon>Pseudomonadati</taxon>
        <taxon>Pseudomonadota</taxon>
        <taxon>Alphaproteobacteria</taxon>
        <taxon>Hyphomicrobiales</taxon>
        <taxon>Rhizobiaceae</taxon>
        <taxon>Sinorhizobium/Ensifer group</taxon>
        <taxon>Sinorhizobium</taxon>
    </lineage>
</organism>
<comment type="function">
    <text evidence="1">Responsible for synthesis of pseudouridine from uracil-55 in the psi GC loop of transfer RNAs.</text>
</comment>
<comment type="catalytic activity">
    <reaction evidence="1">
        <text>uridine(55) in tRNA = pseudouridine(55) in tRNA</text>
        <dbReference type="Rhea" id="RHEA:42532"/>
        <dbReference type="Rhea" id="RHEA-COMP:10101"/>
        <dbReference type="Rhea" id="RHEA-COMP:10102"/>
        <dbReference type="ChEBI" id="CHEBI:65314"/>
        <dbReference type="ChEBI" id="CHEBI:65315"/>
        <dbReference type="EC" id="5.4.99.25"/>
    </reaction>
</comment>
<comment type="similarity">
    <text evidence="1">Belongs to the pseudouridine synthase TruB family. Type 1 subfamily.</text>
</comment>
<evidence type="ECO:0000255" key="1">
    <source>
        <dbReference type="HAMAP-Rule" id="MF_01080"/>
    </source>
</evidence>
<gene>
    <name evidence="1" type="primary">truB</name>
    <name type="ordered locus">R00241</name>
    <name type="ORF">SMc00321</name>
</gene>
<name>TRUB_RHIME</name>
<reference key="1">
    <citation type="journal article" date="2001" name="Proc. Natl. Acad. Sci. U.S.A.">
        <title>Analysis of the chromosome sequence of the legume symbiont Sinorhizobium meliloti strain 1021.</title>
        <authorList>
            <person name="Capela D."/>
            <person name="Barloy-Hubler F."/>
            <person name="Gouzy J."/>
            <person name="Bothe G."/>
            <person name="Ampe F."/>
            <person name="Batut J."/>
            <person name="Boistard P."/>
            <person name="Becker A."/>
            <person name="Boutry M."/>
            <person name="Cadieu E."/>
            <person name="Dreano S."/>
            <person name="Gloux S."/>
            <person name="Godrie T."/>
            <person name="Goffeau A."/>
            <person name="Kahn D."/>
            <person name="Kiss E."/>
            <person name="Lelaure V."/>
            <person name="Masuy D."/>
            <person name="Pohl T."/>
            <person name="Portetelle D."/>
            <person name="Puehler A."/>
            <person name="Purnelle B."/>
            <person name="Ramsperger U."/>
            <person name="Renard C."/>
            <person name="Thebault P."/>
            <person name="Vandenbol M."/>
            <person name="Weidner S."/>
            <person name="Galibert F."/>
        </authorList>
    </citation>
    <scope>NUCLEOTIDE SEQUENCE [LARGE SCALE GENOMIC DNA]</scope>
    <source>
        <strain>1021</strain>
    </source>
</reference>
<reference key="2">
    <citation type="journal article" date="2001" name="Science">
        <title>The composite genome of the legume symbiont Sinorhizobium meliloti.</title>
        <authorList>
            <person name="Galibert F."/>
            <person name="Finan T.M."/>
            <person name="Long S.R."/>
            <person name="Puehler A."/>
            <person name="Abola P."/>
            <person name="Ampe F."/>
            <person name="Barloy-Hubler F."/>
            <person name="Barnett M.J."/>
            <person name="Becker A."/>
            <person name="Boistard P."/>
            <person name="Bothe G."/>
            <person name="Boutry M."/>
            <person name="Bowser L."/>
            <person name="Buhrmester J."/>
            <person name="Cadieu E."/>
            <person name="Capela D."/>
            <person name="Chain P."/>
            <person name="Cowie A."/>
            <person name="Davis R.W."/>
            <person name="Dreano S."/>
            <person name="Federspiel N.A."/>
            <person name="Fisher R.F."/>
            <person name="Gloux S."/>
            <person name="Godrie T."/>
            <person name="Goffeau A."/>
            <person name="Golding B."/>
            <person name="Gouzy J."/>
            <person name="Gurjal M."/>
            <person name="Hernandez-Lucas I."/>
            <person name="Hong A."/>
            <person name="Huizar L."/>
            <person name="Hyman R.W."/>
            <person name="Jones T."/>
            <person name="Kahn D."/>
            <person name="Kahn M.L."/>
            <person name="Kalman S."/>
            <person name="Keating D.H."/>
            <person name="Kiss E."/>
            <person name="Komp C."/>
            <person name="Lelaure V."/>
            <person name="Masuy D."/>
            <person name="Palm C."/>
            <person name="Peck M.C."/>
            <person name="Pohl T.M."/>
            <person name="Portetelle D."/>
            <person name="Purnelle B."/>
            <person name="Ramsperger U."/>
            <person name="Surzycki R."/>
            <person name="Thebault P."/>
            <person name="Vandenbol M."/>
            <person name="Vorhoelter F.J."/>
            <person name="Weidner S."/>
            <person name="Wells D.H."/>
            <person name="Wong K."/>
            <person name="Yeh K.-C."/>
            <person name="Batut J."/>
        </authorList>
    </citation>
    <scope>NUCLEOTIDE SEQUENCE [LARGE SCALE GENOMIC DNA]</scope>
    <source>
        <strain>1021</strain>
    </source>
</reference>
<keyword id="KW-0413">Isomerase</keyword>
<keyword id="KW-1185">Reference proteome</keyword>
<keyword id="KW-0819">tRNA processing</keyword>
<proteinExistence type="inferred from homology"/>
<dbReference type="EC" id="5.4.99.25" evidence="1"/>
<dbReference type="EMBL" id="AL591688">
    <property type="protein sequence ID" value="CAC41678.1"/>
    <property type="molecule type" value="Genomic_DNA"/>
</dbReference>
<dbReference type="RefSeq" id="NP_384347.1">
    <property type="nucleotide sequence ID" value="NC_003047.1"/>
</dbReference>
<dbReference type="RefSeq" id="WP_003534367.1">
    <property type="nucleotide sequence ID" value="NC_003047.1"/>
</dbReference>
<dbReference type="SMR" id="Q92SW2"/>
<dbReference type="EnsemblBacteria" id="CAC41678">
    <property type="protein sequence ID" value="CAC41678"/>
    <property type="gene ID" value="SMc00321"/>
</dbReference>
<dbReference type="GeneID" id="89574567"/>
<dbReference type="KEGG" id="sme:SMc00321"/>
<dbReference type="PATRIC" id="fig|266834.11.peg.1607"/>
<dbReference type="eggNOG" id="COG0130">
    <property type="taxonomic scope" value="Bacteria"/>
</dbReference>
<dbReference type="HOGENOM" id="CLU_032087_0_3_5"/>
<dbReference type="OrthoDB" id="9802309at2"/>
<dbReference type="Proteomes" id="UP000001976">
    <property type="component" value="Chromosome"/>
</dbReference>
<dbReference type="GO" id="GO:0003723">
    <property type="term" value="F:RNA binding"/>
    <property type="evidence" value="ECO:0007669"/>
    <property type="project" value="InterPro"/>
</dbReference>
<dbReference type="GO" id="GO:0160148">
    <property type="term" value="F:tRNA pseudouridine(55) synthase activity"/>
    <property type="evidence" value="ECO:0007669"/>
    <property type="project" value="UniProtKB-EC"/>
</dbReference>
<dbReference type="GO" id="GO:1990481">
    <property type="term" value="P:mRNA pseudouridine synthesis"/>
    <property type="evidence" value="ECO:0007669"/>
    <property type="project" value="TreeGrafter"/>
</dbReference>
<dbReference type="GO" id="GO:0031119">
    <property type="term" value="P:tRNA pseudouridine synthesis"/>
    <property type="evidence" value="ECO:0007669"/>
    <property type="project" value="UniProtKB-UniRule"/>
</dbReference>
<dbReference type="CDD" id="cd02573">
    <property type="entry name" value="PseudoU_synth_EcTruB"/>
    <property type="match status" value="1"/>
</dbReference>
<dbReference type="Gene3D" id="3.30.2350.10">
    <property type="entry name" value="Pseudouridine synthase"/>
    <property type="match status" value="1"/>
</dbReference>
<dbReference type="HAMAP" id="MF_01080">
    <property type="entry name" value="TruB_bact"/>
    <property type="match status" value="1"/>
</dbReference>
<dbReference type="InterPro" id="IPR020103">
    <property type="entry name" value="PsdUridine_synth_cat_dom_sf"/>
</dbReference>
<dbReference type="InterPro" id="IPR002501">
    <property type="entry name" value="PsdUridine_synth_N"/>
</dbReference>
<dbReference type="InterPro" id="IPR015947">
    <property type="entry name" value="PUA-like_sf"/>
</dbReference>
<dbReference type="InterPro" id="IPR014780">
    <property type="entry name" value="tRNA_psdUridine_synth_TruB"/>
</dbReference>
<dbReference type="InterPro" id="IPR032819">
    <property type="entry name" value="TruB_C"/>
</dbReference>
<dbReference type="NCBIfam" id="TIGR00431">
    <property type="entry name" value="TruB"/>
    <property type="match status" value="1"/>
</dbReference>
<dbReference type="PANTHER" id="PTHR13767:SF2">
    <property type="entry name" value="PSEUDOURIDYLATE SYNTHASE TRUB1"/>
    <property type="match status" value="1"/>
</dbReference>
<dbReference type="PANTHER" id="PTHR13767">
    <property type="entry name" value="TRNA-PSEUDOURIDINE SYNTHASE"/>
    <property type="match status" value="1"/>
</dbReference>
<dbReference type="Pfam" id="PF16198">
    <property type="entry name" value="TruB_C_2"/>
    <property type="match status" value="1"/>
</dbReference>
<dbReference type="Pfam" id="PF01509">
    <property type="entry name" value="TruB_N"/>
    <property type="match status" value="1"/>
</dbReference>
<dbReference type="SUPFAM" id="SSF55120">
    <property type="entry name" value="Pseudouridine synthase"/>
    <property type="match status" value="1"/>
</dbReference>
<dbReference type="SUPFAM" id="SSF88697">
    <property type="entry name" value="PUA domain-like"/>
    <property type="match status" value="1"/>
</dbReference>
<accession>Q92SW2</accession>